<evidence type="ECO:0000250" key="1">
    <source>
        <dbReference type="UniProtKB" id="P01270"/>
    </source>
</evidence>
<evidence type="ECO:0000269" key="2">
    <source>
    </source>
</evidence>
<evidence type="ECO:0000269" key="3">
    <source>
    </source>
</evidence>
<evidence type="ECO:0000269" key="4">
    <source>
    </source>
</evidence>
<evidence type="ECO:0000269" key="5">
    <source>
    </source>
</evidence>
<evidence type="ECO:0000269" key="6">
    <source>
    </source>
</evidence>
<evidence type="ECO:0000303" key="7">
    <source>
    </source>
</evidence>
<evidence type="ECO:0000305" key="8"/>
<evidence type="ECO:0000312" key="9">
    <source>
        <dbReference type="MGI" id="MGI:97799"/>
    </source>
</evidence>
<reference key="1">
    <citation type="journal article" date="2002" name="J. Mol. Endocrinol.">
        <title>The murine gene encoding parathyroid hormone: genomic organization, nucleotide sequence and transcriptional regulation.</title>
        <authorList>
            <person name="He B."/>
            <person name="Tong T.K."/>
            <person name="Hiou-Tim F.F."/>
            <person name="Al-Akad B."/>
            <person name="Kronenberg H.M."/>
            <person name="Karaplis A.C."/>
        </authorList>
    </citation>
    <scope>NUCLEOTIDE SEQUENCE [GENOMIC DNA]</scope>
    <scope>TISSUE SPECIFICITY</scope>
    <source>
        <strain>129/Sv</strain>
    </source>
</reference>
<reference key="2">
    <citation type="journal article" date="2005" name="Science">
        <title>The transcriptional landscape of the mammalian genome.</title>
        <authorList>
            <person name="Carninci P."/>
            <person name="Kasukawa T."/>
            <person name="Katayama S."/>
            <person name="Gough J."/>
            <person name="Frith M.C."/>
            <person name="Maeda N."/>
            <person name="Oyama R."/>
            <person name="Ravasi T."/>
            <person name="Lenhard B."/>
            <person name="Wells C."/>
            <person name="Kodzius R."/>
            <person name="Shimokawa K."/>
            <person name="Bajic V.B."/>
            <person name="Brenner S.E."/>
            <person name="Batalov S."/>
            <person name="Forrest A.R."/>
            <person name="Zavolan M."/>
            <person name="Davis M.J."/>
            <person name="Wilming L.G."/>
            <person name="Aidinis V."/>
            <person name="Allen J.E."/>
            <person name="Ambesi-Impiombato A."/>
            <person name="Apweiler R."/>
            <person name="Aturaliya R.N."/>
            <person name="Bailey T.L."/>
            <person name="Bansal M."/>
            <person name="Baxter L."/>
            <person name="Beisel K.W."/>
            <person name="Bersano T."/>
            <person name="Bono H."/>
            <person name="Chalk A.M."/>
            <person name="Chiu K.P."/>
            <person name="Choudhary V."/>
            <person name="Christoffels A."/>
            <person name="Clutterbuck D.R."/>
            <person name="Crowe M.L."/>
            <person name="Dalla E."/>
            <person name="Dalrymple B.P."/>
            <person name="de Bono B."/>
            <person name="Della Gatta G."/>
            <person name="di Bernardo D."/>
            <person name="Down T."/>
            <person name="Engstrom P."/>
            <person name="Fagiolini M."/>
            <person name="Faulkner G."/>
            <person name="Fletcher C.F."/>
            <person name="Fukushima T."/>
            <person name="Furuno M."/>
            <person name="Futaki S."/>
            <person name="Gariboldi M."/>
            <person name="Georgii-Hemming P."/>
            <person name="Gingeras T.R."/>
            <person name="Gojobori T."/>
            <person name="Green R.E."/>
            <person name="Gustincich S."/>
            <person name="Harbers M."/>
            <person name="Hayashi Y."/>
            <person name="Hensch T.K."/>
            <person name="Hirokawa N."/>
            <person name="Hill D."/>
            <person name="Huminiecki L."/>
            <person name="Iacono M."/>
            <person name="Ikeo K."/>
            <person name="Iwama A."/>
            <person name="Ishikawa T."/>
            <person name="Jakt M."/>
            <person name="Kanapin A."/>
            <person name="Katoh M."/>
            <person name="Kawasawa Y."/>
            <person name="Kelso J."/>
            <person name="Kitamura H."/>
            <person name="Kitano H."/>
            <person name="Kollias G."/>
            <person name="Krishnan S.P."/>
            <person name="Kruger A."/>
            <person name="Kummerfeld S.K."/>
            <person name="Kurochkin I.V."/>
            <person name="Lareau L.F."/>
            <person name="Lazarevic D."/>
            <person name="Lipovich L."/>
            <person name="Liu J."/>
            <person name="Liuni S."/>
            <person name="McWilliam S."/>
            <person name="Madan Babu M."/>
            <person name="Madera M."/>
            <person name="Marchionni L."/>
            <person name="Matsuda H."/>
            <person name="Matsuzawa S."/>
            <person name="Miki H."/>
            <person name="Mignone F."/>
            <person name="Miyake S."/>
            <person name="Morris K."/>
            <person name="Mottagui-Tabar S."/>
            <person name="Mulder N."/>
            <person name="Nakano N."/>
            <person name="Nakauchi H."/>
            <person name="Ng P."/>
            <person name="Nilsson R."/>
            <person name="Nishiguchi S."/>
            <person name="Nishikawa S."/>
            <person name="Nori F."/>
            <person name="Ohara O."/>
            <person name="Okazaki Y."/>
            <person name="Orlando V."/>
            <person name="Pang K.C."/>
            <person name="Pavan W.J."/>
            <person name="Pavesi G."/>
            <person name="Pesole G."/>
            <person name="Petrovsky N."/>
            <person name="Piazza S."/>
            <person name="Reed J."/>
            <person name="Reid J.F."/>
            <person name="Ring B.Z."/>
            <person name="Ringwald M."/>
            <person name="Rost B."/>
            <person name="Ruan Y."/>
            <person name="Salzberg S.L."/>
            <person name="Sandelin A."/>
            <person name="Schneider C."/>
            <person name="Schoenbach C."/>
            <person name="Sekiguchi K."/>
            <person name="Semple C.A."/>
            <person name="Seno S."/>
            <person name="Sessa L."/>
            <person name="Sheng Y."/>
            <person name="Shibata Y."/>
            <person name="Shimada H."/>
            <person name="Shimada K."/>
            <person name="Silva D."/>
            <person name="Sinclair B."/>
            <person name="Sperling S."/>
            <person name="Stupka E."/>
            <person name="Sugiura K."/>
            <person name="Sultana R."/>
            <person name="Takenaka Y."/>
            <person name="Taki K."/>
            <person name="Tammoja K."/>
            <person name="Tan S.L."/>
            <person name="Tang S."/>
            <person name="Taylor M.S."/>
            <person name="Tegner J."/>
            <person name="Teichmann S.A."/>
            <person name="Ueda H.R."/>
            <person name="van Nimwegen E."/>
            <person name="Verardo R."/>
            <person name="Wei C.L."/>
            <person name="Yagi K."/>
            <person name="Yamanishi H."/>
            <person name="Zabarovsky E."/>
            <person name="Zhu S."/>
            <person name="Zimmer A."/>
            <person name="Hide W."/>
            <person name="Bult C."/>
            <person name="Grimmond S.M."/>
            <person name="Teasdale R.D."/>
            <person name="Liu E.T."/>
            <person name="Brusic V."/>
            <person name="Quackenbush J."/>
            <person name="Wahlestedt C."/>
            <person name="Mattick J.S."/>
            <person name="Hume D.A."/>
            <person name="Kai C."/>
            <person name="Sasaki D."/>
            <person name="Tomaru Y."/>
            <person name="Fukuda S."/>
            <person name="Kanamori-Katayama M."/>
            <person name="Suzuki M."/>
            <person name="Aoki J."/>
            <person name="Arakawa T."/>
            <person name="Iida J."/>
            <person name="Imamura K."/>
            <person name="Itoh M."/>
            <person name="Kato T."/>
            <person name="Kawaji H."/>
            <person name="Kawagashira N."/>
            <person name="Kawashima T."/>
            <person name="Kojima M."/>
            <person name="Kondo S."/>
            <person name="Konno H."/>
            <person name="Nakano K."/>
            <person name="Ninomiya N."/>
            <person name="Nishio T."/>
            <person name="Okada M."/>
            <person name="Plessy C."/>
            <person name="Shibata K."/>
            <person name="Shiraki T."/>
            <person name="Suzuki S."/>
            <person name="Tagami M."/>
            <person name="Waki K."/>
            <person name="Watahiki A."/>
            <person name="Okamura-Oho Y."/>
            <person name="Suzuki H."/>
            <person name="Kawai J."/>
            <person name="Hayashizaki Y."/>
        </authorList>
    </citation>
    <scope>NUCLEOTIDE SEQUENCE [LARGE SCALE MRNA]</scope>
    <source>
        <strain>C57BL/6J</strain>
        <tissue>Thymus</tissue>
    </source>
</reference>
<reference key="3">
    <citation type="journal article" date="2009" name="PLoS Biol.">
        <title>Lineage-specific biology revealed by a finished genome assembly of the mouse.</title>
        <authorList>
            <person name="Church D.M."/>
            <person name="Goodstadt L."/>
            <person name="Hillier L.W."/>
            <person name="Zody M.C."/>
            <person name="Goldstein S."/>
            <person name="She X."/>
            <person name="Bult C.J."/>
            <person name="Agarwala R."/>
            <person name="Cherry J.L."/>
            <person name="DiCuccio M."/>
            <person name="Hlavina W."/>
            <person name="Kapustin Y."/>
            <person name="Meric P."/>
            <person name="Maglott D."/>
            <person name="Birtle Z."/>
            <person name="Marques A.C."/>
            <person name="Graves T."/>
            <person name="Zhou S."/>
            <person name="Teague B."/>
            <person name="Potamousis K."/>
            <person name="Churas C."/>
            <person name="Place M."/>
            <person name="Herschleb J."/>
            <person name="Runnheim R."/>
            <person name="Forrest D."/>
            <person name="Amos-Landgraf J."/>
            <person name="Schwartz D.C."/>
            <person name="Cheng Z."/>
            <person name="Lindblad-Toh K."/>
            <person name="Eichler E.E."/>
            <person name="Ponting C.P."/>
        </authorList>
    </citation>
    <scope>NUCLEOTIDE SEQUENCE [LARGE SCALE GENOMIC DNA]</scope>
    <source>
        <strain>C57BL/6J</strain>
    </source>
</reference>
<reference key="4">
    <citation type="journal article" date="2004" name="Genome Res.">
        <title>The status, quality, and expansion of the NIH full-length cDNA project: the Mammalian Gene Collection (MGC).</title>
        <authorList>
            <consortium name="The MGC Project Team"/>
        </authorList>
    </citation>
    <scope>NUCLEOTIDE SEQUENCE [LARGE SCALE MRNA]</scope>
    <source>
        <tissue>Thyroid</tissue>
    </source>
</reference>
<reference key="5">
    <citation type="journal article" date="2001" name="Endocrinology">
        <title>PTH regulates fetal blood calcium and skeletal mineralization independently of PTHrP.</title>
        <authorList>
            <person name="Kovacs C.S."/>
            <person name="Chafe L.L."/>
            <person name="Fudge N.J."/>
            <person name="Friel J.K."/>
            <person name="Manley N.R."/>
        </authorList>
    </citation>
    <scope>FUNCTION</scope>
    <scope>SUBCELLULAR LOCATION</scope>
</reference>
<reference key="6">
    <citation type="journal article" date="2002" name="J. Clin. Invest.">
        <title>Parathyroid hormone is essential for normal fetal bone formation.</title>
        <authorList>
            <person name="Miao D."/>
            <person name="He B."/>
            <person name="Karaplis A.C."/>
            <person name="Goltzman D."/>
        </authorList>
    </citation>
    <scope>DISRUPTION PHENOTYPE</scope>
</reference>
<reference key="7">
    <citation type="journal article" date="2003" name="J. Clin. Invest.">
        <title>The calcium-sensing receptor is required for normal calcium homeostasis independent of parathyroid hormone.</title>
        <authorList>
            <person name="Kos C.H."/>
            <person name="Karaplis A.C."/>
            <person name="Peng J.B."/>
            <person name="Hediger M.A."/>
            <person name="Goltzman D."/>
            <person name="Mohammad K.S."/>
            <person name="Guise T.A."/>
            <person name="Pollak M.R."/>
        </authorList>
    </citation>
    <scope>DISRUPTION PHENOTYPE</scope>
</reference>
<reference key="8">
    <citation type="journal article" date="2010" name="J. Bone Miner. Res.">
        <title>Parathyroid hormone regulates fetal-placental mineral homeostasis.</title>
        <authorList>
            <person name="Simmonds C.S."/>
            <person name="Karsenty G."/>
            <person name="Karaplis A.C."/>
            <person name="Kovacs C.S."/>
        </authorList>
    </citation>
    <scope>FUNCTION</scope>
    <scope>TISSUE SPECIFICITY</scope>
    <scope>DISRUPTION PHENOTYPE</scope>
</reference>
<comment type="function">
    <text evidence="1 2 6">Parathyroid hormone elevates calcium level by dissolving the salts in bone and preventing their renal excretion (PubMed:11606467, PubMed:19968565). Acts by binding to its receptor, PTH1R, activating G protein-coupled receptor signaling (By similarity). Stimulates [1-14C]-2-deoxy-D-glucose (2DG) transport and glycogen synthesis in osteoblastic cells (By similarity).</text>
</comment>
<comment type="subunit">
    <text evidence="1">Interacts with PTH1R (via N-terminal extracellular domain).</text>
</comment>
<comment type="subcellular location">
    <subcellularLocation>
        <location evidence="2">Secreted</location>
    </subcellularLocation>
</comment>
<comment type="tissue specificity">
    <text evidence="4 6">Highly expressed in the parathyroid gland (PubMed:12370121). Also expressed in the placenta, thymus and testis (PubMed:12370121, PubMed:19968565).</text>
</comment>
<comment type="disruption phenotype">
    <text evidence="3 5 6">Mice are dysmorphic but viable (PubMed:11994406). They display diminished cartilage matrix mineralization and reduced metaphyseal osteoblasts and trabecular bone during the fetal and neonatal period (PubMed:11994406). Fetuses show a hypoparathyroid phenotype, characterized by hypocalcemia, hypomagnesemia, hyperphosphatemia, low amniotic fluid mineral content and reduced skeletal mineral content (PubMed:19968565). Mice lacking both Casr and Pth survive to adulthood with no obvious difference in size or appearance relative to control; they however show a wider range of values for serum calcium and renal excretion of calcium (PubMed:12671051).</text>
</comment>
<comment type="similarity">
    <text evidence="8">Belongs to the parathyroid hormone family.</text>
</comment>
<keyword id="KW-0165">Cleavage on pair of basic residues</keyword>
<keyword id="KW-0372">Hormone</keyword>
<keyword id="KW-1185">Reference proteome</keyword>
<keyword id="KW-0964">Secreted</keyword>
<keyword id="KW-0732">Signal</keyword>
<dbReference type="EMBL" id="AH007117">
    <property type="protein sequence ID" value="AAC99656.1"/>
    <property type="molecule type" value="Genomic_DNA"/>
</dbReference>
<dbReference type="EMBL" id="BC099456">
    <property type="protein sequence ID" value="AAH99456.1"/>
    <property type="molecule type" value="mRNA"/>
</dbReference>
<dbReference type="EMBL" id="AK138677">
    <property type="protein sequence ID" value="BAE23743.1"/>
    <property type="molecule type" value="mRNA"/>
</dbReference>
<dbReference type="RefSeq" id="NP_065648.1">
    <property type="nucleotide sequence ID" value="NM_020623.2"/>
</dbReference>
<dbReference type="SMR" id="Q9Z0L6"/>
<dbReference type="FunCoup" id="Q9Z0L6">
    <property type="interactions" value="873"/>
</dbReference>
<dbReference type="STRING" id="10090.ENSMUSP00000078723"/>
<dbReference type="PhosphoSitePlus" id="Q9Z0L6"/>
<dbReference type="PaxDb" id="10090-ENSMUSP00000078723"/>
<dbReference type="ProteomicsDB" id="341303"/>
<dbReference type="Antibodypedia" id="11928">
    <property type="antibodies" value="2325 antibodies from 42 providers"/>
</dbReference>
<dbReference type="DNASU" id="19226"/>
<dbReference type="Ensembl" id="ENSMUST00000079793.7">
    <property type="protein sequence ID" value="ENSMUSP00000078723.6"/>
    <property type="gene ID" value="ENSMUSG00000059077.7"/>
</dbReference>
<dbReference type="GeneID" id="19226"/>
<dbReference type="KEGG" id="mmu:19226"/>
<dbReference type="UCSC" id="uc009jhm.1">
    <property type="organism name" value="mouse"/>
</dbReference>
<dbReference type="AGR" id="MGI:97799"/>
<dbReference type="CTD" id="5741"/>
<dbReference type="MGI" id="MGI:97799">
    <property type="gene designation" value="Pth"/>
</dbReference>
<dbReference type="VEuPathDB" id="HostDB:ENSMUSG00000059077"/>
<dbReference type="eggNOG" id="ENOG502SB2W">
    <property type="taxonomic scope" value="Eukaryota"/>
</dbReference>
<dbReference type="GeneTree" id="ENSGT00390000018603"/>
<dbReference type="HOGENOM" id="CLU_164143_0_0_1"/>
<dbReference type="OMA" id="MKLQDVH"/>
<dbReference type="OrthoDB" id="9890537at2759"/>
<dbReference type="TreeFam" id="TF336197"/>
<dbReference type="Reactome" id="R-MMU-373080">
    <property type="pathway name" value="Class B/2 (Secretin family receptors)"/>
</dbReference>
<dbReference type="Reactome" id="R-MMU-418555">
    <property type="pathway name" value="G alpha (s) signalling events"/>
</dbReference>
<dbReference type="BioGRID-ORCS" id="19226">
    <property type="hits" value="1 hit in 77 CRISPR screens"/>
</dbReference>
<dbReference type="ChiTaRS" id="Pth">
    <property type="organism name" value="mouse"/>
</dbReference>
<dbReference type="Proteomes" id="UP000000589">
    <property type="component" value="Chromosome 7"/>
</dbReference>
<dbReference type="Bgee" id="ENSMUSG00000059077">
    <property type="expression patterns" value="Expressed in trachea and 17 other cell types or tissues"/>
</dbReference>
<dbReference type="GO" id="GO:0005615">
    <property type="term" value="C:extracellular space"/>
    <property type="evidence" value="ECO:0000314"/>
    <property type="project" value="MGI"/>
</dbReference>
<dbReference type="GO" id="GO:0005179">
    <property type="term" value="F:hormone activity"/>
    <property type="evidence" value="ECO:0000314"/>
    <property type="project" value="MGI"/>
</dbReference>
<dbReference type="GO" id="GO:0051428">
    <property type="term" value="F:peptide hormone receptor binding"/>
    <property type="evidence" value="ECO:0007669"/>
    <property type="project" value="Ensembl"/>
</dbReference>
<dbReference type="GO" id="GO:0031857">
    <property type="term" value="F:type 1 parathyroid hormone receptor binding"/>
    <property type="evidence" value="ECO:0007669"/>
    <property type="project" value="Ensembl"/>
</dbReference>
<dbReference type="GO" id="GO:0007189">
    <property type="term" value="P:adenylate cyclase-activating G protein-coupled receptor signaling pathway"/>
    <property type="evidence" value="ECO:0000314"/>
    <property type="project" value="MGI"/>
</dbReference>
<dbReference type="GO" id="GO:0030282">
    <property type="term" value="P:bone mineralization"/>
    <property type="evidence" value="ECO:0000315"/>
    <property type="project" value="MGI"/>
</dbReference>
<dbReference type="GO" id="GO:0055074">
    <property type="term" value="P:calcium ion homeostasis"/>
    <property type="evidence" value="ECO:0000315"/>
    <property type="project" value="MGI"/>
</dbReference>
<dbReference type="GO" id="GO:0007267">
    <property type="term" value="P:cell-cell signaling"/>
    <property type="evidence" value="ECO:0007669"/>
    <property type="project" value="Ensembl"/>
</dbReference>
<dbReference type="GO" id="GO:0048873">
    <property type="term" value="P:homeostasis of number of cells within a tissue"/>
    <property type="evidence" value="ECO:0000316"/>
    <property type="project" value="MGI"/>
</dbReference>
<dbReference type="GO" id="GO:0006874">
    <property type="term" value="P:intracellular calcium ion homeostasis"/>
    <property type="evidence" value="ECO:0000314"/>
    <property type="project" value="MGI"/>
</dbReference>
<dbReference type="GO" id="GO:0010960">
    <property type="term" value="P:magnesium ion homeostasis"/>
    <property type="evidence" value="ECO:0000315"/>
    <property type="project" value="MGI"/>
</dbReference>
<dbReference type="GO" id="GO:0071866">
    <property type="term" value="P:negative regulation of apoptotic process in bone marrow cell"/>
    <property type="evidence" value="ECO:0000316"/>
    <property type="project" value="MGI"/>
</dbReference>
<dbReference type="GO" id="GO:1900158">
    <property type="term" value="P:negative regulation of bone mineralization involved in bone maturation"/>
    <property type="evidence" value="ECO:0007669"/>
    <property type="project" value="Ensembl"/>
</dbReference>
<dbReference type="GO" id="GO:0032331">
    <property type="term" value="P:negative regulation of chondrocyte differentiation"/>
    <property type="evidence" value="ECO:0007669"/>
    <property type="project" value="Ensembl"/>
</dbReference>
<dbReference type="GO" id="GO:0010629">
    <property type="term" value="P:negative regulation of gene expression"/>
    <property type="evidence" value="ECO:0007669"/>
    <property type="project" value="Ensembl"/>
</dbReference>
<dbReference type="GO" id="GO:0055062">
    <property type="term" value="P:phosphate ion homeostasis"/>
    <property type="evidence" value="ECO:0000315"/>
    <property type="project" value="MGI"/>
</dbReference>
<dbReference type="GO" id="GO:0030501">
    <property type="term" value="P:positive regulation of bone mineralization"/>
    <property type="evidence" value="ECO:0007669"/>
    <property type="project" value="Ensembl"/>
</dbReference>
<dbReference type="GO" id="GO:0071864">
    <property type="term" value="P:positive regulation of cell proliferation in bone marrow"/>
    <property type="evidence" value="ECO:0000316"/>
    <property type="project" value="MGI"/>
</dbReference>
<dbReference type="GO" id="GO:0046326">
    <property type="term" value="P:positive regulation of D-glucose import"/>
    <property type="evidence" value="ECO:0007669"/>
    <property type="project" value="UniProtKB-UniRule"/>
</dbReference>
<dbReference type="GO" id="GO:0010628">
    <property type="term" value="P:positive regulation of gene expression"/>
    <property type="evidence" value="ECO:0007669"/>
    <property type="project" value="Ensembl"/>
</dbReference>
<dbReference type="GO" id="GO:0045725">
    <property type="term" value="P:positive regulation of glycogen biosynthetic process"/>
    <property type="evidence" value="ECO:0007669"/>
    <property type="project" value="Ensembl"/>
</dbReference>
<dbReference type="GO" id="GO:0060732">
    <property type="term" value="P:positive regulation of inositol phosphate biosynthetic process"/>
    <property type="evidence" value="ECO:0007669"/>
    <property type="project" value="Ensembl"/>
</dbReference>
<dbReference type="GO" id="GO:0090290">
    <property type="term" value="P:positive regulation of osteoclast proliferation"/>
    <property type="evidence" value="ECO:0000316"/>
    <property type="project" value="MGI"/>
</dbReference>
<dbReference type="GO" id="GO:0009967">
    <property type="term" value="P:positive regulation of signal transduction"/>
    <property type="evidence" value="ECO:0000315"/>
    <property type="project" value="MGI"/>
</dbReference>
<dbReference type="GO" id="GO:0045944">
    <property type="term" value="P:positive regulation of transcription by RNA polymerase II"/>
    <property type="evidence" value="ECO:0000314"/>
    <property type="project" value="MGI"/>
</dbReference>
<dbReference type="GO" id="GO:0010468">
    <property type="term" value="P:regulation of gene expression"/>
    <property type="evidence" value="ECO:0000314"/>
    <property type="project" value="MGI"/>
</dbReference>
<dbReference type="GO" id="GO:0046686">
    <property type="term" value="P:response to cadmium ion"/>
    <property type="evidence" value="ECO:0007669"/>
    <property type="project" value="Ensembl"/>
</dbReference>
<dbReference type="GO" id="GO:0045471">
    <property type="term" value="P:response to ethanol"/>
    <property type="evidence" value="ECO:0007669"/>
    <property type="project" value="Ensembl"/>
</dbReference>
<dbReference type="GO" id="GO:0071774">
    <property type="term" value="P:response to fibroblast growth factor"/>
    <property type="evidence" value="ECO:0007669"/>
    <property type="project" value="Ensembl"/>
</dbReference>
<dbReference type="GO" id="GO:0010288">
    <property type="term" value="P:response to lead ion"/>
    <property type="evidence" value="ECO:0007669"/>
    <property type="project" value="Ensembl"/>
</dbReference>
<dbReference type="GO" id="GO:0071107">
    <property type="term" value="P:response to parathyroid hormone"/>
    <property type="evidence" value="ECO:0007669"/>
    <property type="project" value="Ensembl"/>
</dbReference>
<dbReference type="GO" id="GO:0033280">
    <property type="term" value="P:response to vitamin D"/>
    <property type="evidence" value="ECO:0007669"/>
    <property type="project" value="Ensembl"/>
</dbReference>
<dbReference type="GO" id="GO:0009410">
    <property type="term" value="P:response to xenobiotic stimulus"/>
    <property type="evidence" value="ECO:0007669"/>
    <property type="project" value="Ensembl"/>
</dbReference>
<dbReference type="GO" id="GO:0007266">
    <property type="term" value="P:Rho protein signal transduction"/>
    <property type="evidence" value="ECO:0007669"/>
    <property type="project" value="Ensembl"/>
</dbReference>
<dbReference type="GO" id="GO:0007165">
    <property type="term" value="P:signal transduction"/>
    <property type="evidence" value="ECO:0000315"/>
    <property type="project" value="MGI"/>
</dbReference>
<dbReference type="GO" id="GO:0006366">
    <property type="term" value="P:transcription by RNA polymerase II"/>
    <property type="evidence" value="ECO:0000314"/>
    <property type="project" value="MGI"/>
</dbReference>
<dbReference type="InterPro" id="IPR003625">
    <property type="entry name" value="PTH"/>
</dbReference>
<dbReference type="InterPro" id="IPR001415">
    <property type="entry name" value="PTH/PTH-rel"/>
</dbReference>
<dbReference type="PANTHER" id="PTHR10541">
    <property type="entry name" value="PARATHYROID HORMONE"/>
    <property type="match status" value="1"/>
</dbReference>
<dbReference type="PANTHER" id="PTHR10541:SF2">
    <property type="entry name" value="PARATHYROID HORMONE"/>
    <property type="match status" value="1"/>
</dbReference>
<dbReference type="Pfam" id="PF01279">
    <property type="entry name" value="Parathyroid"/>
    <property type="match status" value="1"/>
</dbReference>
<dbReference type="PIRSF" id="PIRSF001832">
    <property type="entry name" value="PTH"/>
    <property type="match status" value="1"/>
</dbReference>
<dbReference type="SMART" id="SM00087">
    <property type="entry name" value="PTH"/>
    <property type="match status" value="1"/>
</dbReference>
<dbReference type="PROSITE" id="PS00335">
    <property type="entry name" value="PARATHYROID"/>
    <property type="match status" value="1"/>
</dbReference>
<protein>
    <recommendedName>
        <fullName evidence="7">Parathyroid hormone</fullName>
        <shortName evidence="7">PTH</shortName>
    </recommendedName>
</protein>
<sequence length="115" mass="12825">MMSANTVAKVMIIMLAVCLLTQTDGKPVRKRAVSEIQLMHNLGKHLASMERMQWLRRKLQDMHNFVSLGVQMAARDGSHQKPTKKEENVLVDGNPKSLGEGDKADVDVLVKSKSQ</sequence>
<name>PTHY_MOUSE</name>
<feature type="signal peptide" evidence="1">
    <location>
        <begin position="1"/>
        <end position="25"/>
    </location>
</feature>
<feature type="propeptide" id="PRO_0000462465" evidence="1">
    <location>
        <begin position="26"/>
        <end position="31"/>
    </location>
</feature>
<feature type="chain" id="PRO_5015024084" description="Parathyroid hormone">
    <location>
        <begin position="32"/>
        <end position="115"/>
    </location>
</feature>
<feature type="region of interest" description="Important for receptor binding" evidence="1">
    <location>
        <begin position="51"/>
        <end position="69"/>
    </location>
</feature>
<accession>Q9Z0L6</accession>
<proteinExistence type="evidence at transcript level"/>
<gene>
    <name evidence="7 9" type="primary">Pth</name>
</gene>
<organism>
    <name type="scientific">Mus musculus</name>
    <name type="common">Mouse</name>
    <dbReference type="NCBI Taxonomy" id="10090"/>
    <lineage>
        <taxon>Eukaryota</taxon>
        <taxon>Metazoa</taxon>
        <taxon>Chordata</taxon>
        <taxon>Craniata</taxon>
        <taxon>Vertebrata</taxon>
        <taxon>Euteleostomi</taxon>
        <taxon>Mammalia</taxon>
        <taxon>Eutheria</taxon>
        <taxon>Euarchontoglires</taxon>
        <taxon>Glires</taxon>
        <taxon>Rodentia</taxon>
        <taxon>Myomorpha</taxon>
        <taxon>Muroidea</taxon>
        <taxon>Muridae</taxon>
        <taxon>Murinae</taxon>
        <taxon>Mus</taxon>
        <taxon>Mus</taxon>
    </lineage>
</organism>